<gene>
    <name type="ordered locus">SPG_1474</name>
</gene>
<name>Y1474_STRP4</name>
<organism>
    <name type="scientific">Streptococcus pneumoniae serotype 19F (strain G54)</name>
    <dbReference type="NCBI Taxonomy" id="512566"/>
    <lineage>
        <taxon>Bacteria</taxon>
        <taxon>Bacillati</taxon>
        <taxon>Bacillota</taxon>
        <taxon>Bacilli</taxon>
        <taxon>Lactobacillales</taxon>
        <taxon>Streptococcaceae</taxon>
        <taxon>Streptococcus</taxon>
    </lineage>
</organism>
<dbReference type="EMBL" id="CP001015">
    <property type="protein sequence ID" value="ACF56290.1"/>
    <property type="molecule type" value="Genomic_DNA"/>
</dbReference>
<dbReference type="SMR" id="B5E6B3"/>
<dbReference type="KEGG" id="spx:SPG_1474"/>
<dbReference type="HOGENOM" id="CLU_061989_2_1_9"/>
<dbReference type="GO" id="GO:0005829">
    <property type="term" value="C:cytosol"/>
    <property type="evidence" value="ECO:0007669"/>
    <property type="project" value="TreeGrafter"/>
</dbReference>
<dbReference type="GO" id="GO:0033194">
    <property type="term" value="P:response to hydroperoxide"/>
    <property type="evidence" value="ECO:0007669"/>
    <property type="project" value="TreeGrafter"/>
</dbReference>
<dbReference type="HAMAP" id="MF_00652">
    <property type="entry name" value="UPF0246"/>
    <property type="match status" value="1"/>
</dbReference>
<dbReference type="InterPro" id="IPR005583">
    <property type="entry name" value="YaaA"/>
</dbReference>
<dbReference type="NCBIfam" id="NF002543">
    <property type="entry name" value="PRK02101.1-4"/>
    <property type="match status" value="1"/>
</dbReference>
<dbReference type="PANTHER" id="PTHR30283:SF4">
    <property type="entry name" value="PEROXIDE STRESS RESISTANCE PROTEIN YAAA"/>
    <property type="match status" value="1"/>
</dbReference>
<dbReference type="PANTHER" id="PTHR30283">
    <property type="entry name" value="PEROXIDE STRESS RESPONSE PROTEIN YAAA"/>
    <property type="match status" value="1"/>
</dbReference>
<dbReference type="Pfam" id="PF03883">
    <property type="entry name" value="H2O2_YaaD"/>
    <property type="match status" value="1"/>
</dbReference>
<protein>
    <recommendedName>
        <fullName evidence="1">UPF0246 protein SPG_1474</fullName>
    </recommendedName>
</protein>
<proteinExistence type="inferred from homology"/>
<feature type="chain" id="PRO_1000131148" description="UPF0246 protein SPG_1474">
    <location>
        <begin position="1"/>
        <end position="242"/>
    </location>
</feature>
<accession>B5E6B3</accession>
<comment type="similarity">
    <text evidence="1">Belongs to the UPF0246 family.</text>
</comment>
<evidence type="ECO:0000255" key="1">
    <source>
        <dbReference type="HAMAP-Rule" id="MF_00652"/>
    </source>
</evidence>
<reference key="1">
    <citation type="journal article" date="2001" name="Microb. Drug Resist.">
        <title>Annotated draft genomic sequence from a Streptococcus pneumoniae type 19F clinical isolate.</title>
        <authorList>
            <person name="Dopazo J."/>
            <person name="Mendoza A."/>
            <person name="Herrero J."/>
            <person name="Caldara F."/>
            <person name="Humbert Y."/>
            <person name="Friedli L."/>
            <person name="Guerrier M."/>
            <person name="Grand-Schenk E."/>
            <person name="Gandin C."/>
            <person name="de Francesco M."/>
            <person name="Polissi A."/>
            <person name="Buell G."/>
            <person name="Feger G."/>
            <person name="Garcia E."/>
            <person name="Peitsch M."/>
            <person name="Garcia-Bustos J.F."/>
        </authorList>
    </citation>
    <scope>NUCLEOTIDE SEQUENCE [LARGE SCALE GENOMIC DNA]</scope>
    <source>
        <strain>G54</strain>
    </source>
</reference>
<reference key="2">
    <citation type="submission" date="2008-03" db="EMBL/GenBank/DDBJ databases">
        <title>Pneumococcal beta glucoside metabolism investigated by whole genome comparison.</title>
        <authorList>
            <person name="Mulas L."/>
            <person name="Trappetti C."/>
            <person name="Hakenbeck R."/>
            <person name="Iannelli F."/>
            <person name="Pozzi G."/>
            <person name="Davidsen T.M."/>
            <person name="Tettelin H."/>
            <person name="Oggioni M."/>
        </authorList>
    </citation>
    <scope>NUCLEOTIDE SEQUENCE [LARGE SCALE GENOMIC DNA]</scope>
    <source>
        <strain>G54</strain>
    </source>
</reference>
<sequence length="242" mass="27466">MKILIPTAKEMNTDLPSIEAIPLKPESQTVLDALALYSASQLESFYKVSAEKAAEEFQNIQALKRQTAQHYPALKLFDGLMYRNIKRDKLTEAEQDYLENHVFITSALYGVVPALSPMAPHRLDFLMKLKVAGKTLKSHWKAVYDEALKKEEVIFSLLSSEFETVFSKEIRAKMVTFKFMEDRGGQLKIHSTISKKARGAFLTALIENQVQTVGEARRLNFAGFVYREDLSQPQGLVFVKEV</sequence>